<accession>Q7N0J9</accession>
<name>THII_PHOLL</name>
<feature type="chain" id="PRO_0000154855" description="tRNA sulfurtransferase">
    <location>
        <begin position="1"/>
        <end position="482"/>
    </location>
</feature>
<feature type="domain" description="THUMP" evidence="1">
    <location>
        <begin position="61"/>
        <end position="165"/>
    </location>
</feature>
<feature type="domain" description="Rhodanese" evidence="1">
    <location>
        <begin position="404"/>
        <end position="482"/>
    </location>
</feature>
<feature type="active site" description="Cysteine persulfide intermediate" evidence="1">
    <location>
        <position position="456"/>
    </location>
</feature>
<feature type="binding site" evidence="1">
    <location>
        <begin position="183"/>
        <end position="184"/>
    </location>
    <ligand>
        <name>ATP</name>
        <dbReference type="ChEBI" id="CHEBI:30616"/>
    </ligand>
</feature>
<feature type="binding site" evidence="1">
    <location>
        <position position="265"/>
    </location>
    <ligand>
        <name>ATP</name>
        <dbReference type="ChEBI" id="CHEBI:30616"/>
    </ligand>
</feature>
<feature type="binding site" evidence="1">
    <location>
        <position position="287"/>
    </location>
    <ligand>
        <name>ATP</name>
        <dbReference type="ChEBI" id="CHEBI:30616"/>
    </ligand>
</feature>
<feature type="binding site" evidence="1">
    <location>
        <position position="296"/>
    </location>
    <ligand>
        <name>ATP</name>
        <dbReference type="ChEBI" id="CHEBI:30616"/>
    </ligand>
</feature>
<feature type="disulfide bond" description="Redox-active" evidence="1">
    <location>
        <begin position="344"/>
        <end position="456"/>
    </location>
</feature>
<keyword id="KW-0067">ATP-binding</keyword>
<keyword id="KW-0963">Cytoplasm</keyword>
<keyword id="KW-1015">Disulfide bond</keyword>
<keyword id="KW-0547">Nucleotide-binding</keyword>
<keyword id="KW-0676">Redox-active center</keyword>
<keyword id="KW-1185">Reference proteome</keyword>
<keyword id="KW-0694">RNA-binding</keyword>
<keyword id="KW-0784">Thiamine biosynthesis</keyword>
<keyword id="KW-0808">Transferase</keyword>
<keyword id="KW-0820">tRNA-binding</keyword>
<protein>
    <recommendedName>
        <fullName evidence="1">tRNA sulfurtransferase</fullName>
        <ecNumber evidence="1">2.8.1.4</ecNumber>
    </recommendedName>
    <alternativeName>
        <fullName evidence="1">Sulfur carrier protein ThiS sulfurtransferase</fullName>
    </alternativeName>
    <alternativeName>
        <fullName evidence="1">Thiamine biosynthesis protein ThiI</fullName>
    </alternativeName>
    <alternativeName>
        <fullName evidence="1">tRNA 4-thiouridine synthase</fullName>
    </alternativeName>
</protein>
<gene>
    <name evidence="1" type="primary">thiI</name>
    <name type="ordered locus">plu3884</name>
</gene>
<organism>
    <name type="scientific">Photorhabdus laumondii subsp. laumondii (strain DSM 15139 / CIP 105565 / TT01)</name>
    <name type="common">Photorhabdus luminescens subsp. laumondii</name>
    <dbReference type="NCBI Taxonomy" id="243265"/>
    <lineage>
        <taxon>Bacteria</taxon>
        <taxon>Pseudomonadati</taxon>
        <taxon>Pseudomonadota</taxon>
        <taxon>Gammaproteobacteria</taxon>
        <taxon>Enterobacterales</taxon>
        <taxon>Morganellaceae</taxon>
        <taxon>Photorhabdus</taxon>
    </lineage>
</organism>
<dbReference type="EC" id="2.8.1.4" evidence="1"/>
<dbReference type="EMBL" id="BX571872">
    <property type="protein sequence ID" value="CAE16256.1"/>
    <property type="molecule type" value="Genomic_DNA"/>
</dbReference>
<dbReference type="RefSeq" id="WP_011148022.1">
    <property type="nucleotide sequence ID" value="NC_005126.1"/>
</dbReference>
<dbReference type="SMR" id="Q7N0J9"/>
<dbReference type="STRING" id="243265.plu3884"/>
<dbReference type="GeneID" id="48850115"/>
<dbReference type="KEGG" id="plu:plu3884"/>
<dbReference type="eggNOG" id="COG0301">
    <property type="taxonomic scope" value="Bacteria"/>
</dbReference>
<dbReference type="eggNOG" id="COG0607">
    <property type="taxonomic scope" value="Bacteria"/>
</dbReference>
<dbReference type="HOGENOM" id="CLU_037952_4_1_6"/>
<dbReference type="OrthoDB" id="9773948at2"/>
<dbReference type="UniPathway" id="UPA00060"/>
<dbReference type="Proteomes" id="UP000002514">
    <property type="component" value="Chromosome"/>
</dbReference>
<dbReference type="GO" id="GO:0005829">
    <property type="term" value="C:cytosol"/>
    <property type="evidence" value="ECO:0007669"/>
    <property type="project" value="TreeGrafter"/>
</dbReference>
<dbReference type="GO" id="GO:0005524">
    <property type="term" value="F:ATP binding"/>
    <property type="evidence" value="ECO:0007669"/>
    <property type="project" value="UniProtKB-UniRule"/>
</dbReference>
<dbReference type="GO" id="GO:0004810">
    <property type="term" value="F:CCA tRNA nucleotidyltransferase activity"/>
    <property type="evidence" value="ECO:0007669"/>
    <property type="project" value="InterPro"/>
</dbReference>
<dbReference type="GO" id="GO:0000049">
    <property type="term" value="F:tRNA binding"/>
    <property type="evidence" value="ECO:0007669"/>
    <property type="project" value="UniProtKB-UniRule"/>
</dbReference>
<dbReference type="GO" id="GO:0140741">
    <property type="term" value="F:tRNA-uracil-4 sulfurtransferase activity"/>
    <property type="evidence" value="ECO:0007669"/>
    <property type="project" value="UniProtKB-EC"/>
</dbReference>
<dbReference type="GO" id="GO:0009228">
    <property type="term" value="P:thiamine biosynthetic process"/>
    <property type="evidence" value="ECO:0007669"/>
    <property type="project" value="UniProtKB-KW"/>
</dbReference>
<dbReference type="GO" id="GO:0009229">
    <property type="term" value="P:thiamine diphosphate biosynthetic process"/>
    <property type="evidence" value="ECO:0007669"/>
    <property type="project" value="UniProtKB-UniRule"/>
</dbReference>
<dbReference type="GO" id="GO:0052837">
    <property type="term" value="P:thiazole biosynthetic process"/>
    <property type="evidence" value="ECO:0007669"/>
    <property type="project" value="InterPro"/>
</dbReference>
<dbReference type="GO" id="GO:0002937">
    <property type="term" value="P:tRNA 4-thiouridine biosynthesis"/>
    <property type="evidence" value="ECO:0007669"/>
    <property type="project" value="TreeGrafter"/>
</dbReference>
<dbReference type="CDD" id="cd01712">
    <property type="entry name" value="PPase_ThiI"/>
    <property type="match status" value="1"/>
</dbReference>
<dbReference type="CDD" id="cd00158">
    <property type="entry name" value="RHOD"/>
    <property type="match status" value="1"/>
</dbReference>
<dbReference type="CDD" id="cd11716">
    <property type="entry name" value="THUMP_ThiI"/>
    <property type="match status" value="1"/>
</dbReference>
<dbReference type="FunFam" id="3.30.2130.30:FF:000002">
    <property type="entry name" value="tRNA sulfurtransferase"/>
    <property type="match status" value="1"/>
</dbReference>
<dbReference type="FunFam" id="3.40.250.10:FF:000003">
    <property type="entry name" value="tRNA sulfurtransferase"/>
    <property type="match status" value="1"/>
</dbReference>
<dbReference type="FunFam" id="3.40.50.620:FF:000029">
    <property type="entry name" value="tRNA sulfurtransferase"/>
    <property type="match status" value="1"/>
</dbReference>
<dbReference type="Gene3D" id="3.30.2130.30">
    <property type="match status" value="1"/>
</dbReference>
<dbReference type="Gene3D" id="3.40.50.620">
    <property type="entry name" value="HUPs"/>
    <property type="match status" value="1"/>
</dbReference>
<dbReference type="Gene3D" id="3.40.250.10">
    <property type="entry name" value="Rhodanese-like domain"/>
    <property type="match status" value="1"/>
</dbReference>
<dbReference type="HAMAP" id="MF_00021">
    <property type="entry name" value="ThiI"/>
    <property type="match status" value="1"/>
</dbReference>
<dbReference type="InterPro" id="IPR001763">
    <property type="entry name" value="Rhodanese-like_dom"/>
</dbReference>
<dbReference type="InterPro" id="IPR036873">
    <property type="entry name" value="Rhodanese-like_dom_sf"/>
</dbReference>
<dbReference type="InterPro" id="IPR014729">
    <property type="entry name" value="Rossmann-like_a/b/a_fold"/>
</dbReference>
<dbReference type="InterPro" id="IPR020536">
    <property type="entry name" value="ThiI_AANH"/>
</dbReference>
<dbReference type="InterPro" id="IPR054173">
    <property type="entry name" value="ThiI_fer"/>
</dbReference>
<dbReference type="InterPro" id="IPR049961">
    <property type="entry name" value="ThiI_N"/>
</dbReference>
<dbReference type="InterPro" id="IPR026340">
    <property type="entry name" value="THII_Thiazole_biosynth_dom"/>
</dbReference>
<dbReference type="InterPro" id="IPR004114">
    <property type="entry name" value="THUMP_dom"/>
</dbReference>
<dbReference type="InterPro" id="IPR049962">
    <property type="entry name" value="THUMP_ThiI"/>
</dbReference>
<dbReference type="InterPro" id="IPR003720">
    <property type="entry name" value="tRNA_STrfase"/>
</dbReference>
<dbReference type="InterPro" id="IPR050102">
    <property type="entry name" value="tRNA_sulfurtransferase_ThiI"/>
</dbReference>
<dbReference type="NCBIfam" id="TIGR04271">
    <property type="entry name" value="ThiI_C_thiazole"/>
    <property type="match status" value="1"/>
</dbReference>
<dbReference type="NCBIfam" id="TIGR00342">
    <property type="entry name" value="tRNA uracil 4-sulfurtransferase ThiI"/>
    <property type="match status" value="1"/>
</dbReference>
<dbReference type="PANTHER" id="PTHR43209">
    <property type="entry name" value="TRNA SULFURTRANSFERASE"/>
    <property type="match status" value="1"/>
</dbReference>
<dbReference type="PANTHER" id="PTHR43209:SF1">
    <property type="entry name" value="TRNA SULFURTRANSFERASE"/>
    <property type="match status" value="1"/>
</dbReference>
<dbReference type="Pfam" id="PF02568">
    <property type="entry name" value="ThiI"/>
    <property type="match status" value="1"/>
</dbReference>
<dbReference type="Pfam" id="PF22025">
    <property type="entry name" value="ThiI_fer"/>
    <property type="match status" value="1"/>
</dbReference>
<dbReference type="Pfam" id="PF02926">
    <property type="entry name" value="THUMP"/>
    <property type="match status" value="1"/>
</dbReference>
<dbReference type="SMART" id="SM00981">
    <property type="entry name" value="THUMP"/>
    <property type="match status" value="1"/>
</dbReference>
<dbReference type="SUPFAM" id="SSF52402">
    <property type="entry name" value="Adenine nucleotide alpha hydrolases-like"/>
    <property type="match status" value="1"/>
</dbReference>
<dbReference type="SUPFAM" id="SSF52821">
    <property type="entry name" value="Rhodanese/Cell cycle control phosphatase"/>
    <property type="match status" value="1"/>
</dbReference>
<dbReference type="SUPFAM" id="SSF143437">
    <property type="entry name" value="THUMP domain-like"/>
    <property type="match status" value="1"/>
</dbReference>
<dbReference type="PROSITE" id="PS50206">
    <property type="entry name" value="RHODANESE_3"/>
    <property type="match status" value="1"/>
</dbReference>
<dbReference type="PROSITE" id="PS51165">
    <property type="entry name" value="THUMP"/>
    <property type="match status" value="1"/>
</dbReference>
<reference key="1">
    <citation type="journal article" date="2003" name="Nat. Biotechnol.">
        <title>The genome sequence of the entomopathogenic bacterium Photorhabdus luminescens.</title>
        <authorList>
            <person name="Duchaud E."/>
            <person name="Rusniok C."/>
            <person name="Frangeul L."/>
            <person name="Buchrieser C."/>
            <person name="Givaudan A."/>
            <person name="Taourit S."/>
            <person name="Bocs S."/>
            <person name="Boursaux-Eude C."/>
            <person name="Chandler M."/>
            <person name="Charles J.-F."/>
            <person name="Dassa E."/>
            <person name="Derose R."/>
            <person name="Derzelle S."/>
            <person name="Freyssinet G."/>
            <person name="Gaudriault S."/>
            <person name="Medigue C."/>
            <person name="Lanois A."/>
            <person name="Powell K."/>
            <person name="Siguier P."/>
            <person name="Vincent R."/>
            <person name="Wingate V."/>
            <person name="Zouine M."/>
            <person name="Glaser P."/>
            <person name="Boemare N."/>
            <person name="Danchin A."/>
            <person name="Kunst F."/>
        </authorList>
    </citation>
    <scope>NUCLEOTIDE SEQUENCE [LARGE SCALE GENOMIC DNA]</scope>
    <source>
        <strain>DSM 15139 / CIP 105565 / TT01</strain>
    </source>
</reference>
<proteinExistence type="inferred from homology"/>
<comment type="function">
    <text evidence="1">Catalyzes the ATP-dependent transfer of a sulfur to tRNA to produce 4-thiouridine in position 8 of tRNAs, which functions as a near-UV photosensor. Also catalyzes the transfer of sulfur to the sulfur carrier protein ThiS, forming ThiS-thiocarboxylate. This is a step in the synthesis of thiazole, in the thiamine biosynthesis pathway. The sulfur is donated as persulfide by IscS.</text>
</comment>
<comment type="catalytic activity">
    <reaction evidence="1">
        <text>[ThiI sulfur-carrier protein]-S-sulfanyl-L-cysteine + a uridine in tRNA + 2 reduced [2Fe-2S]-[ferredoxin] + ATP + H(+) = [ThiI sulfur-carrier protein]-L-cysteine + a 4-thiouridine in tRNA + 2 oxidized [2Fe-2S]-[ferredoxin] + AMP + diphosphate</text>
        <dbReference type="Rhea" id="RHEA:24176"/>
        <dbReference type="Rhea" id="RHEA-COMP:10000"/>
        <dbReference type="Rhea" id="RHEA-COMP:10001"/>
        <dbReference type="Rhea" id="RHEA-COMP:13337"/>
        <dbReference type="Rhea" id="RHEA-COMP:13338"/>
        <dbReference type="Rhea" id="RHEA-COMP:13339"/>
        <dbReference type="Rhea" id="RHEA-COMP:13340"/>
        <dbReference type="ChEBI" id="CHEBI:15378"/>
        <dbReference type="ChEBI" id="CHEBI:29950"/>
        <dbReference type="ChEBI" id="CHEBI:30616"/>
        <dbReference type="ChEBI" id="CHEBI:33019"/>
        <dbReference type="ChEBI" id="CHEBI:33737"/>
        <dbReference type="ChEBI" id="CHEBI:33738"/>
        <dbReference type="ChEBI" id="CHEBI:61963"/>
        <dbReference type="ChEBI" id="CHEBI:65315"/>
        <dbReference type="ChEBI" id="CHEBI:136798"/>
        <dbReference type="ChEBI" id="CHEBI:456215"/>
        <dbReference type="EC" id="2.8.1.4"/>
    </reaction>
</comment>
<comment type="catalytic activity">
    <reaction evidence="1">
        <text>[ThiS sulfur-carrier protein]-C-terminal Gly-Gly-AMP + S-sulfanyl-L-cysteinyl-[cysteine desulfurase] + AH2 = [ThiS sulfur-carrier protein]-C-terminal-Gly-aminoethanethioate + L-cysteinyl-[cysteine desulfurase] + A + AMP + 2 H(+)</text>
        <dbReference type="Rhea" id="RHEA:43340"/>
        <dbReference type="Rhea" id="RHEA-COMP:12157"/>
        <dbReference type="Rhea" id="RHEA-COMP:12158"/>
        <dbReference type="Rhea" id="RHEA-COMP:12910"/>
        <dbReference type="Rhea" id="RHEA-COMP:19908"/>
        <dbReference type="ChEBI" id="CHEBI:13193"/>
        <dbReference type="ChEBI" id="CHEBI:15378"/>
        <dbReference type="ChEBI" id="CHEBI:17499"/>
        <dbReference type="ChEBI" id="CHEBI:29950"/>
        <dbReference type="ChEBI" id="CHEBI:61963"/>
        <dbReference type="ChEBI" id="CHEBI:90618"/>
        <dbReference type="ChEBI" id="CHEBI:232372"/>
        <dbReference type="ChEBI" id="CHEBI:456215"/>
    </reaction>
</comment>
<comment type="pathway">
    <text evidence="1">Cofactor biosynthesis; thiamine diphosphate biosynthesis.</text>
</comment>
<comment type="subcellular location">
    <subcellularLocation>
        <location evidence="1">Cytoplasm</location>
    </subcellularLocation>
</comment>
<comment type="similarity">
    <text evidence="1">Belongs to the ThiI family.</text>
</comment>
<evidence type="ECO:0000255" key="1">
    <source>
        <dbReference type="HAMAP-Rule" id="MF_00021"/>
    </source>
</evidence>
<sequence length="482" mass="54598">MKFIIKLFPEITIKSQTVRLRFIKILASNIRNVLKTLGDNIAVVRHWDNIEVRTKDENLGVQICDALTRIPGIHHILQVEEREFRDMHHIFEQAYEAYGELLHNKTFCVRVKRRGKHQFTSNEVERYVGGGLNQHIESAKVKLNHPDVTVNLEIDQDVLILVKARYEGIGGFPIGTQEDVLSLISGGFDSGVSSYMLMRRGCRVHYCFFNLGGSAHEIGVKQVAHYLWNRFGSSHKVRFVAVDFEPVVAEILEKVDDGQMGVVLKRMMVRAASKVAERYGVQAIVTGEALGQVSSQTLTNLRLIDNASDTLILRPLISHDKEHIIRLAREIGTEDFARTMPEFCGVISKSPTVKAVKAKIEAEEANFDFNILEKVVSEAQNVDIRQIAEQSSEQVVEIETVTAFAPTDVLLDIRSPDEQDDRPLQLNGVEIKSLPFYKLSSQFGDLPKEKTYLLYCERGVMSRLQALYLSEQGFDNVKVYRP</sequence>